<gene>
    <name evidence="1" type="primary">clpS</name>
    <name type="ordered locus">PD_0664</name>
</gene>
<proteinExistence type="inferred from homology"/>
<keyword id="KW-1185">Reference proteome</keyword>
<organism>
    <name type="scientific">Xylella fastidiosa (strain Temecula1 / ATCC 700964)</name>
    <dbReference type="NCBI Taxonomy" id="183190"/>
    <lineage>
        <taxon>Bacteria</taxon>
        <taxon>Pseudomonadati</taxon>
        <taxon>Pseudomonadota</taxon>
        <taxon>Gammaproteobacteria</taxon>
        <taxon>Lysobacterales</taxon>
        <taxon>Lysobacteraceae</taxon>
        <taxon>Xylella</taxon>
    </lineage>
</organism>
<feature type="chain" id="PRO_0000215766" description="ATP-dependent Clp protease adapter protein ClpS">
    <location>
        <begin position="1"/>
        <end position="106"/>
    </location>
</feature>
<feature type="region of interest" description="Disordered" evidence="2">
    <location>
        <begin position="1"/>
        <end position="23"/>
    </location>
</feature>
<feature type="compositionally biased region" description="Basic and acidic residues" evidence="2">
    <location>
        <begin position="1"/>
        <end position="10"/>
    </location>
</feature>
<protein>
    <recommendedName>
        <fullName evidence="1">ATP-dependent Clp protease adapter protein ClpS</fullName>
    </recommendedName>
</protein>
<accession>Q87DL8</accession>
<comment type="function">
    <text evidence="1">Involved in the modulation of the specificity of the ClpAP-mediated ATP-dependent protein degradation.</text>
</comment>
<comment type="subunit">
    <text evidence="1">Binds to the N-terminal domain of the chaperone ClpA.</text>
</comment>
<comment type="similarity">
    <text evidence="1">Belongs to the ClpS family.</text>
</comment>
<dbReference type="EMBL" id="AE009442">
    <property type="protein sequence ID" value="AAO28535.1"/>
    <property type="molecule type" value="Genomic_DNA"/>
</dbReference>
<dbReference type="RefSeq" id="WP_004083751.1">
    <property type="nucleotide sequence ID" value="NC_004556.1"/>
</dbReference>
<dbReference type="SMR" id="Q87DL8"/>
<dbReference type="GeneID" id="93904442"/>
<dbReference type="KEGG" id="xft:PD_0664"/>
<dbReference type="HOGENOM" id="CLU_134358_2_1_6"/>
<dbReference type="Proteomes" id="UP000002516">
    <property type="component" value="Chromosome"/>
</dbReference>
<dbReference type="GO" id="GO:0030163">
    <property type="term" value="P:protein catabolic process"/>
    <property type="evidence" value="ECO:0007669"/>
    <property type="project" value="InterPro"/>
</dbReference>
<dbReference type="GO" id="GO:0006508">
    <property type="term" value="P:proteolysis"/>
    <property type="evidence" value="ECO:0007669"/>
    <property type="project" value="UniProtKB-UniRule"/>
</dbReference>
<dbReference type="FunFam" id="3.30.1390.10:FF:000002">
    <property type="entry name" value="ATP-dependent Clp protease adapter protein ClpS"/>
    <property type="match status" value="1"/>
</dbReference>
<dbReference type="Gene3D" id="3.30.1390.10">
    <property type="match status" value="1"/>
</dbReference>
<dbReference type="HAMAP" id="MF_00302">
    <property type="entry name" value="ClpS"/>
    <property type="match status" value="1"/>
</dbReference>
<dbReference type="InterPro" id="IPR022935">
    <property type="entry name" value="ClpS"/>
</dbReference>
<dbReference type="InterPro" id="IPR003769">
    <property type="entry name" value="ClpS_core"/>
</dbReference>
<dbReference type="InterPro" id="IPR014719">
    <property type="entry name" value="Ribosomal_bL12_C/ClpS-like"/>
</dbReference>
<dbReference type="NCBIfam" id="NF000672">
    <property type="entry name" value="PRK00033.1-5"/>
    <property type="match status" value="1"/>
</dbReference>
<dbReference type="PANTHER" id="PTHR33473:SF19">
    <property type="entry name" value="ATP-DEPENDENT CLP PROTEASE ADAPTER PROTEIN CLPS"/>
    <property type="match status" value="1"/>
</dbReference>
<dbReference type="PANTHER" id="PTHR33473">
    <property type="entry name" value="ATP-DEPENDENT CLP PROTEASE ADAPTER PROTEIN CLPS1, CHLOROPLASTIC"/>
    <property type="match status" value="1"/>
</dbReference>
<dbReference type="Pfam" id="PF02617">
    <property type="entry name" value="ClpS"/>
    <property type="match status" value="1"/>
</dbReference>
<dbReference type="SUPFAM" id="SSF54736">
    <property type="entry name" value="ClpS-like"/>
    <property type="match status" value="1"/>
</dbReference>
<reference key="1">
    <citation type="journal article" date="2003" name="J. Bacteriol.">
        <title>Comparative analyses of the complete genome sequences of Pierce's disease and citrus variegated chlorosis strains of Xylella fastidiosa.</title>
        <authorList>
            <person name="Van Sluys M.A."/>
            <person name="de Oliveira M.C."/>
            <person name="Monteiro-Vitorello C.B."/>
            <person name="Miyaki C.Y."/>
            <person name="Furlan L.R."/>
            <person name="Camargo L.E.A."/>
            <person name="da Silva A.C.R."/>
            <person name="Moon D.H."/>
            <person name="Takita M.A."/>
            <person name="Lemos E.G.M."/>
            <person name="Machado M.A."/>
            <person name="Ferro M.I.T."/>
            <person name="da Silva F.R."/>
            <person name="Goldman M.H.S."/>
            <person name="Goldman G.H."/>
            <person name="Lemos M.V.F."/>
            <person name="El-Dorry H."/>
            <person name="Tsai S.M."/>
            <person name="Carrer H."/>
            <person name="Carraro D.M."/>
            <person name="de Oliveira R.C."/>
            <person name="Nunes L.R."/>
            <person name="Siqueira W.J."/>
            <person name="Coutinho L.L."/>
            <person name="Kimura E.T."/>
            <person name="Ferro E.S."/>
            <person name="Harakava R."/>
            <person name="Kuramae E.E."/>
            <person name="Marino C.L."/>
            <person name="Giglioti E."/>
            <person name="Abreu I.L."/>
            <person name="Alves L.M.C."/>
            <person name="do Amaral A.M."/>
            <person name="Baia G.S."/>
            <person name="Blanco S.R."/>
            <person name="Brito M.S."/>
            <person name="Cannavan F.S."/>
            <person name="Celestino A.V."/>
            <person name="da Cunha A.F."/>
            <person name="Fenille R.C."/>
            <person name="Ferro J.A."/>
            <person name="Formighieri E.F."/>
            <person name="Kishi L.T."/>
            <person name="Leoni S.G."/>
            <person name="Oliveira A.R."/>
            <person name="Rosa V.E. Jr."/>
            <person name="Sassaki F.T."/>
            <person name="Sena J.A.D."/>
            <person name="de Souza A.A."/>
            <person name="Truffi D."/>
            <person name="Tsukumo F."/>
            <person name="Yanai G.M."/>
            <person name="Zaros L.G."/>
            <person name="Civerolo E.L."/>
            <person name="Simpson A.J.G."/>
            <person name="Almeida N.F. Jr."/>
            <person name="Setubal J.C."/>
            <person name="Kitajima J.P."/>
        </authorList>
    </citation>
    <scope>NUCLEOTIDE SEQUENCE [LARGE SCALE GENOMIC DNA]</scope>
    <source>
        <strain>Temecula1 / ATCC 700964</strain>
    </source>
</reference>
<sequence length="106" mass="12100">MSQKTVHDQDNALLLETGNTKVAPPPRYQVLLLNDDYTPMDFVIVVLQQFFAMDLKKATQVMLHVHTRGRGVCGFYTREVAESKVAQVNEFSRIHQHPLLCTMKQA</sequence>
<name>CLPS_XYLFT</name>
<evidence type="ECO:0000255" key="1">
    <source>
        <dbReference type="HAMAP-Rule" id="MF_00302"/>
    </source>
</evidence>
<evidence type="ECO:0000256" key="2">
    <source>
        <dbReference type="SAM" id="MobiDB-lite"/>
    </source>
</evidence>